<gene>
    <name type="primary">TUBB2</name>
</gene>
<proteinExistence type="evidence at transcript level"/>
<evidence type="ECO:0000250" key="1">
    <source>
        <dbReference type="UniProtKB" id="P68363"/>
    </source>
</evidence>
<evidence type="ECO:0000250" key="2">
    <source>
        <dbReference type="UniProtKB" id="Q13509"/>
    </source>
</evidence>
<evidence type="ECO:0000256" key="3">
    <source>
        <dbReference type="SAM" id="MobiDB-lite"/>
    </source>
</evidence>
<evidence type="ECO:0000305" key="4"/>
<comment type="function">
    <text>Tubulin is the major constituent of microtubules, a cylinder consisting of laterally associated linear protofilaments composed of alpha- and beta-tubulin heterodimers. Microtubules grow by the addition of GTP-tubulin dimers to the microtubule end, where a stabilizing cap forms. Below the cap, tubulin dimers are in GDP-bound state, owing to GTPase activity of alpha-tubulin.</text>
</comment>
<comment type="cofactor">
    <cofactor evidence="1">
        <name>Mg(2+)</name>
        <dbReference type="ChEBI" id="CHEBI:18420"/>
    </cofactor>
</comment>
<comment type="subunit">
    <text>Dimer of alpha and beta chains. A typical microtubule is a hollow water-filled tube with an outer diameter of 25 nm and an inner diameter of 15 nM. Alpha-beta heterodimers associate head-to-tail to form protofilaments running lengthwise along the microtubule wall with the beta-tubulin subunit facing the microtubule plus end conferring a structural polarity. Microtubules usually have 13 protofilaments but different protofilament numbers can be found in some organisms and specialized cells.</text>
</comment>
<comment type="subcellular location">
    <subcellularLocation>
        <location>Cytoplasm</location>
        <location>Cytoskeleton</location>
    </subcellularLocation>
</comment>
<comment type="similarity">
    <text evidence="4">Belongs to the tubulin family.</text>
</comment>
<name>TBB2_SOLTU</name>
<reference key="1">
    <citation type="journal article" date="1994" name="Plant Mol. Biol.">
        <title>Characterisation of the cDNA clones of two beta-tubulin genes and their expression in the potato plant (Solanum tuberosum L.).</title>
        <authorList>
            <person name="Taylor M.A."/>
            <person name="Wright F."/>
            <person name="Davies H.V."/>
        </authorList>
    </citation>
    <scope>NUCLEOTIDE SEQUENCE [MRNA]</scope>
</reference>
<sequence>MREILHIQGGQCGNQIGSKFWEVICDEHGVDPTGRYKGTAAESDLQLERINVYFNEASGGRYVPRAVLMDLEPGTMDSIRSGPYGQIFRPDNLVFGQSGAGNNWAKGHYTEGAELIDAVLDVVRKEAENCDCLQGFQVCHSLGGGTGSGMGTLLISKVREEYPDRMMLTFSVFPSPKVSDTVVEPYNATLSVHQLVENADECMVLDNEALYDICFRTLKLTTPSFGDLNHLISATMSGVTCCLRFPGQLNSDLRKLAVNLIPLPRLHFFMVGFAPLTSRGSQQYISLTVPELTQQMWDAKNMMCAADPRHGRYLTASAMFRGKMSTKEVDEQMINVQNKNSSYFVEWIPNNVKSSVCDIPPTGLKMASTFVGNSTSIQEMFRRVSEQFTAMFRRKAFLHWYTGEGMDEMEFTEAESNMNDPVAEYQQYQDATADDEEEYDDEAADDHHQYES</sequence>
<protein>
    <recommendedName>
        <fullName>Tubulin beta-2 chain</fullName>
    </recommendedName>
    <alternativeName>
        <fullName>Beta-2-tubulin</fullName>
    </alternativeName>
</protein>
<accession>P46264</accession>
<dbReference type="EMBL" id="Z33402">
    <property type="protein sequence ID" value="CAA83853.1"/>
    <property type="molecule type" value="mRNA"/>
</dbReference>
<dbReference type="PIR" id="S50748">
    <property type="entry name" value="S50748"/>
</dbReference>
<dbReference type="SMR" id="P46264"/>
<dbReference type="FunCoup" id="P46264">
    <property type="interactions" value="1506"/>
</dbReference>
<dbReference type="STRING" id="4113.P46264"/>
<dbReference type="InParanoid" id="P46264"/>
<dbReference type="Proteomes" id="UP000011115">
    <property type="component" value="Unassembled WGS sequence"/>
</dbReference>
<dbReference type="ExpressionAtlas" id="P46264">
    <property type="expression patterns" value="baseline and differential"/>
</dbReference>
<dbReference type="GO" id="GO:0005737">
    <property type="term" value="C:cytoplasm"/>
    <property type="evidence" value="ECO:0000318"/>
    <property type="project" value="GO_Central"/>
</dbReference>
<dbReference type="GO" id="GO:0005874">
    <property type="term" value="C:microtubule"/>
    <property type="evidence" value="ECO:0000318"/>
    <property type="project" value="GO_Central"/>
</dbReference>
<dbReference type="GO" id="GO:0005525">
    <property type="term" value="F:GTP binding"/>
    <property type="evidence" value="ECO:0000318"/>
    <property type="project" value="GO_Central"/>
</dbReference>
<dbReference type="GO" id="GO:0003924">
    <property type="term" value="F:GTPase activity"/>
    <property type="evidence" value="ECO:0007669"/>
    <property type="project" value="InterPro"/>
</dbReference>
<dbReference type="GO" id="GO:0046872">
    <property type="term" value="F:metal ion binding"/>
    <property type="evidence" value="ECO:0007669"/>
    <property type="project" value="UniProtKB-KW"/>
</dbReference>
<dbReference type="GO" id="GO:0005200">
    <property type="term" value="F:structural constituent of cytoskeleton"/>
    <property type="evidence" value="ECO:0000318"/>
    <property type="project" value="GO_Central"/>
</dbReference>
<dbReference type="GO" id="GO:0000226">
    <property type="term" value="P:microtubule cytoskeleton organization"/>
    <property type="evidence" value="ECO:0000318"/>
    <property type="project" value="GO_Central"/>
</dbReference>
<dbReference type="GO" id="GO:0000278">
    <property type="term" value="P:mitotic cell cycle"/>
    <property type="evidence" value="ECO:0000318"/>
    <property type="project" value="GO_Central"/>
</dbReference>
<dbReference type="CDD" id="cd02187">
    <property type="entry name" value="beta_tubulin"/>
    <property type="match status" value="1"/>
</dbReference>
<dbReference type="FunFam" id="1.10.287.600:FF:000002">
    <property type="entry name" value="Tubulin beta chain"/>
    <property type="match status" value="1"/>
</dbReference>
<dbReference type="FunFam" id="3.30.1330.20:FF:000002">
    <property type="entry name" value="Tubulin beta chain"/>
    <property type="match status" value="1"/>
</dbReference>
<dbReference type="FunFam" id="3.40.50.1440:FF:000005">
    <property type="entry name" value="Tubulin beta chain"/>
    <property type="match status" value="1"/>
</dbReference>
<dbReference type="Gene3D" id="1.10.287.600">
    <property type="entry name" value="Helix hairpin bin"/>
    <property type="match status" value="1"/>
</dbReference>
<dbReference type="Gene3D" id="3.30.1330.20">
    <property type="entry name" value="Tubulin/FtsZ, C-terminal domain"/>
    <property type="match status" value="1"/>
</dbReference>
<dbReference type="Gene3D" id="3.40.50.1440">
    <property type="entry name" value="Tubulin/FtsZ, GTPase domain"/>
    <property type="match status" value="1"/>
</dbReference>
<dbReference type="InterPro" id="IPR013838">
    <property type="entry name" value="Beta-tubulin_BS"/>
</dbReference>
<dbReference type="InterPro" id="IPR002453">
    <property type="entry name" value="Beta_tubulin"/>
</dbReference>
<dbReference type="InterPro" id="IPR008280">
    <property type="entry name" value="Tub_FtsZ_C"/>
</dbReference>
<dbReference type="InterPro" id="IPR000217">
    <property type="entry name" value="Tubulin"/>
</dbReference>
<dbReference type="InterPro" id="IPR037103">
    <property type="entry name" value="Tubulin/FtsZ-like_C"/>
</dbReference>
<dbReference type="InterPro" id="IPR018316">
    <property type="entry name" value="Tubulin/FtsZ_2-layer-sand-dom"/>
</dbReference>
<dbReference type="InterPro" id="IPR036525">
    <property type="entry name" value="Tubulin/FtsZ_GTPase_sf"/>
</dbReference>
<dbReference type="InterPro" id="IPR023123">
    <property type="entry name" value="Tubulin_C"/>
</dbReference>
<dbReference type="InterPro" id="IPR017975">
    <property type="entry name" value="Tubulin_CS"/>
</dbReference>
<dbReference type="InterPro" id="IPR003008">
    <property type="entry name" value="Tubulin_FtsZ_GTPase"/>
</dbReference>
<dbReference type="PANTHER" id="PTHR11588">
    <property type="entry name" value="TUBULIN"/>
    <property type="match status" value="1"/>
</dbReference>
<dbReference type="Pfam" id="PF00091">
    <property type="entry name" value="Tubulin"/>
    <property type="match status" value="1"/>
</dbReference>
<dbReference type="Pfam" id="PF03953">
    <property type="entry name" value="Tubulin_C"/>
    <property type="match status" value="1"/>
</dbReference>
<dbReference type="PRINTS" id="PR01163">
    <property type="entry name" value="BETATUBULIN"/>
</dbReference>
<dbReference type="PRINTS" id="PR01161">
    <property type="entry name" value="TUBULIN"/>
</dbReference>
<dbReference type="SMART" id="SM00864">
    <property type="entry name" value="Tubulin"/>
    <property type="match status" value="1"/>
</dbReference>
<dbReference type="SMART" id="SM00865">
    <property type="entry name" value="Tubulin_C"/>
    <property type="match status" value="1"/>
</dbReference>
<dbReference type="SUPFAM" id="SSF55307">
    <property type="entry name" value="Tubulin C-terminal domain-like"/>
    <property type="match status" value="1"/>
</dbReference>
<dbReference type="SUPFAM" id="SSF52490">
    <property type="entry name" value="Tubulin nucleotide-binding domain-like"/>
    <property type="match status" value="1"/>
</dbReference>
<dbReference type="PROSITE" id="PS00227">
    <property type="entry name" value="TUBULIN"/>
    <property type="match status" value="1"/>
</dbReference>
<dbReference type="PROSITE" id="PS00228">
    <property type="entry name" value="TUBULIN_B_AUTOREG"/>
    <property type="match status" value="1"/>
</dbReference>
<feature type="chain" id="PRO_0000048380" description="Tubulin beta-2 chain">
    <location>
        <begin position="1"/>
        <end position="452"/>
    </location>
</feature>
<feature type="region of interest" description="Disordered" evidence="3">
    <location>
        <begin position="414"/>
        <end position="452"/>
    </location>
</feature>
<feature type="compositionally biased region" description="Acidic residues" evidence="3">
    <location>
        <begin position="432"/>
        <end position="444"/>
    </location>
</feature>
<feature type="binding site" evidence="2">
    <location>
        <position position="11"/>
    </location>
    <ligand>
        <name>GTP</name>
        <dbReference type="ChEBI" id="CHEBI:37565"/>
    </ligand>
</feature>
<feature type="binding site" evidence="1">
    <location>
        <position position="72"/>
    </location>
    <ligand>
        <name>GTP</name>
        <dbReference type="ChEBI" id="CHEBI:37565"/>
    </ligand>
</feature>
<feature type="binding site" evidence="1">
    <location>
        <position position="72"/>
    </location>
    <ligand>
        <name>Mg(2+)</name>
        <dbReference type="ChEBI" id="CHEBI:18420"/>
    </ligand>
</feature>
<feature type="binding site" evidence="2">
    <location>
        <position position="141"/>
    </location>
    <ligand>
        <name>GTP</name>
        <dbReference type="ChEBI" id="CHEBI:37565"/>
    </ligand>
</feature>
<feature type="binding site" evidence="2">
    <location>
        <position position="145"/>
    </location>
    <ligand>
        <name>GTP</name>
        <dbReference type="ChEBI" id="CHEBI:37565"/>
    </ligand>
</feature>
<feature type="binding site" evidence="2">
    <location>
        <position position="146"/>
    </location>
    <ligand>
        <name>GTP</name>
        <dbReference type="ChEBI" id="CHEBI:37565"/>
    </ligand>
</feature>
<feature type="binding site" evidence="2">
    <location>
        <position position="147"/>
    </location>
    <ligand>
        <name>GTP</name>
        <dbReference type="ChEBI" id="CHEBI:37565"/>
    </ligand>
</feature>
<feature type="binding site" evidence="2">
    <location>
        <position position="207"/>
    </location>
    <ligand>
        <name>GTP</name>
        <dbReference type="ChEBI" id="CHEBI:37565"/>
    </ligand>
</feature>
<feature type="binding site" evidence="2">
    <location>
        <position position="229"/>
    </location>
    <ligand>
        <name>GTP</name>
        <dbReference type="ChEBI" id="CHEBI:37565"/>
    </ligand>
</feature>
<organism>
    <name type="scientific">Solanum tuberosum</name>
    <name type="common">Potato</name>
    <dbReference type="NCBI Taxonomy" id="4113"/>
    <lineage>
        <taxon>Eukaryota</taxon>
        <taxon>Viridiplantae</taxon>
        <taxon>Streptophyta</taxon>
        <taxon>Embryophyta</taxon>
        <taxon>Tracheophyta</taxon>
        <taxon>Spermatophyta</taxon>
        <taxon>Magnoliopsida</taxon>
        <taxon>eudicotyledons</taxon>
        <taxon>Gunneridae</taxon>
        <taxon>Pentapetalae</taxon>
        <taxon>asterids</taxon>
        <taxon>lamiids</taxon>
        <taxon>Solanales</taxon>
        <taxon>Solanaceae</taxon>
        <taxon>Solanoideae</taxon>
        <taxon>Solaneae</taxon>
        <taxon>Solanum</taxon>
    </lineage>
</organism>
<keyword id="KW-0963">Cytoplasm</keyword>
<keyword id="KW-0206">Cytoskeleton</keyword>
<keyword id="KW-0342">GTP-binding</keyword>
<keyword id="KW-0460">Magnesium</keyword>
<keyword id="KW-0479">Metal-binding</keyword>
<keyword id="KW-0493">Microtubule</keyword>
<keyword id="KW-0547">Nucleotide-binding</keyword>
<keyword id="KW-1185">Reference proteome</keyword>